<proteinExistence type="evidence at protein level"/>
<accession>Q00537</accession>
<accession>A8K1U6</accession>
<accession>B2RCQ2</accession>
<accession>Q8NEB8</accession>
<keyword id="KW-0025">Alternative splicing</keyword>
<keyword id="KW-0067">ATP-binding</keyword>
<keyword id="KW-0418">Kinase</keyword>
<keyword id="KW-0547">Nucleotide-binding</keyword>
<keyword id="KW-0597">Phosphoprotein</keyword>
<keyword id="KW-1267">Proteomics identification</keyword>
<keyword id="KW-1185">Reference proteome</keyword>
<keyword id="KW-0723">Serine/threonine-protein kinase</keyword>
<keyword id="KW-0808">Transferase</keyword>
<organism>
    <name type="scientific">Homo sapiens</name>
    <name type="common">Human</name>
    <dbReference type="NCBI Taxonomy" id="9606"/>
    <lineage>
        <taxon>Eukaryota</taxon>
        <taxon>Metazoa</taxon>
        <taxon>Chordata</taxon>
        <taxon>Craniata</taxon>
        <taxon>Vertebrata</taxon>
        <taxon>Euteleostomi</taxon>
        <taxon>Mammalia</taxon>
        <taxon>Eutheria</taxon>
        <taxon>Euarchontoglires</taxon>
        <taxon>Primates</taxon>
        <taxon>Haplorrhini</taxon>
        <taxon>Catarrhini</taxon>
        <taxon>Hominidae</taxon>
        <taxon>Homo</taxon>
    </lineage>
</organism>
<gene>
    <name type="primary">CDK17</name>
    <name type="synonym">PCTAIRE2</name>
    <name type="synonym">PCTK2</name>
</gene>
<dbReference type="EC" id="2.7.11.22"/>
<dbReference type="EMBL" id="X66360">
    <property type="protein sequence ID" value="CAA47004.1"/>
    <property type="molecule type" value="mRNA"/>
</dbReference>
<dbReference type="EMBL" id="AK290011">
    <property type="protein sequence ID" value="BAF82700.1"/>
    <property type="molecule type" value="mRNA"/>
</dbReference>
<dbReference type="EMBL" id="AK315214">
    <property type="protein sequence ID" value="BAG37649.1"/>
    <property type="molecule type" value="mRNA"/>
</dbReference>
<dbReference type="EMBL" id="AC125612">
    <property type="status" value="NOT_ANNOTATED_CDS"/>
    <property type="molecule type" value="Genomic_DNA"/>
</dbReference>
<dbReference type="EMBL" id="CH471054">
    <property type="protein sequence ID" value="EAW97566.1"/>
    <property type="molecule type" value="Genomic_DNA"/>
</dbReference>
<dbReference type="EMBL" id="CH471054">
    <property type="protein sequence ID" value="EAW97567.1"/>
    <property type="molecule type" value="Genomic_DNA"/>
</dbReference>
<dbReference type="EMBL" id="BC033005">
    <property type="protein sequence ID" value="AAH33005.1"/>
    <property type="molecule type" value="mRNA"/>
</dbReference>
<dbReference type="CCDS" id="CCDS53819.1">
    <molecule id="Q00537-2"/>
</dbReference>
<dbReference type="CCDS" id="CCDS9061.1">
    <molecule id="Q00537-1"/>
</dbReference>
<dbReference type="PIR" id="S23384">
    <property type="entry name" value="S23384"/>
</dbReference>
<dbReference type="RefSeq" id="NP_001163935.1">
    <molecule id="Q00537-2"/>
    <property type="nucleotide sequence ID" value="NM_001170464.4"/>
</dbReference>
<dbReference type="RefSeq" id="NP_002586.2">
    <molecule id="Q00537-1"/>
    <property type="nucleotide sequence ID" value="NM_002595.4"/>
</dbReference>
<dbReference type="RefSeq" id="XP_016874894.1">
    <molecule id="Q00537-1"/>
    <property type="nucleotide sequence ID" value="XM_017019405.2"/>
</dbReference>
<dbReference type="RefSeq" id="XP_016874895.1">
    <molecule id="Q00537-1"/>
    <property type="nucleotide sequence ID" value="XM_017019406.2"/>
</dbReference>
<dbReference type="RefSeq" id="XP_054228168.1">
    <molecule id="Q00537-1"/>
    <property type="nucleotide sequence ID" value="XM_054372193.1"/>
</dbReference>
<dbReference type="RefSeq" id="XP_054228169.1">
    <molecule id="Q00537-1"/>
    <property type="nucleotide sequence ID" value="XM_054372194.1"/>
</dbReference>
<dbReference type="SMR" id="Q00537"/>
<dbReference type="BioGRID" id="111155">
    <property type="interactions" value="69"/>
</dbReference>
<dbReference type="FunCoup" id="Q00537">
    <property type="interactions" value="3956"/>
</dbReference>
<dbReference type="IntAct" id="Q00537">
    <property type="interactions" value="53"/>
</dbReference>
<dbReference type="MINT" id="Q00537"/>
<dbReference type="STRING" id="9606.ENSP00000261211"/>
<dbReference type="BindingDB" id="Q00537"/>
<dbReference type="ChEMBL" id="CHEMBL5790"/>
<dbReference type="DrugBank" id="DB12010">
    <property type="generic name" value="Fostamatinib"/>
</dbReference>
<dbReference type="DrugCentral" id="Q00537"/>
<dbReference type="iPTMnet" id="Q00537"/>
<dbReference type="PhosphoSitePlus" id="Q00537"/>
<dbReference type="SwissPalm" id="Q00537"/>
<dbReference type="BioMuta" id="CDK17"/>
<dbReference type="DMDM" id="59803097"/>
<dbReference type="CPTAC" id="non-CPTAC-2937"/>
<dbReference type="CPTAC" id="non-CPTAC-2938"/>
<dbReference type="CPTAC" id="non-CPTAC-5666"/>
<dbReference type="CPTAC" id="non-CPTAC-5667"/>
<dbReference type="jPOST" id="Q00537"/>
<dbReference type="MassIVE" id="Q00537"/>
<dbReference type="PaxDb" id="9606-ENSP00000261211"/>
<dbReference type="PeptideAtlas" id="Q00537"/>
<dbReference type="ProteomicsDB" id="57855">
    <molecule id="Q00537-1"/>
</dbReference>
<dbReference type="ProteomicsDB" id="57856">
    <molecule id="Q00537-2"/>
</dbReference>
<dbReference type="Pumba" id="Q00537"/>
<dbReference type="Antibodypedia" id="17666">
    <property type="antibodies" value="155 antibodies from 28 providers"/>
</dbReference>
<dbReference type="DNASU" id="5128"/>
<dbReference type="Ensembl" id="ENST00000261211.8">
    <molecule id="Q00537-1"/>
    <property type="protein sequence ID" value="ENSP00000261211.3"/>
    <property type="gene ID" value="ENSG00000059758.8"/>
</dbReference>
<dbReference type="Ensembl" id="ENST00000543119.6">
    <molecule id="Q00537-2"/>
    <property type="protein sequence ID" value="ENSP00000444459.2"/>
    <property type="gene ID" value="ENSG00000059758.8"/>
</dbReference>
<dbReference type="GeneID" id="5128"/>
<dbReference type="KEGG" id="hsa:5128"/>
<dbReference type="MANE-Select" id="ENST00000261211.8">
    <property type="protein sequence ID" value="ENSP00000261211.3"/>
    <property type="RefSeq nucleotide sequence ID" value="NM_002595.5"/>
    <property type="RefSeq protein sequence ID" value="NP_002586.2"/>
</dbReference>
<dbReference type="UCSC" id="uc001tep.3">
    <molecule id="Q00537-1"/>
    <property type="organism name" value="human"/>
</dbReference>
<dbReference type="AGR" id="HGNC:8750"/>
<dbReference type="CTD" id="5128"/>
<dbReference type="DisGeNET" id="5128"/>
<dbReference type="GeneCards" id="CDK17"/>
<dbReference type="HGNC" id="HGNC:8750">
    <property type="gene designation" value="CDK17"/>
</dbReference>
<dbReference type="HPA" id="ENSG00000059758">
    <property type="expression patterns" value="Low tissue specificity"/>
</dbReference>
<dbReference type="MIM" id="603440">
    <property type="type" value="gene"/>
</dbReference>
<dbReference type="neXtProt" id="NX_Q00537"/>
<dbReference type="OpenTargets" id="ENSG00000059758"/>
<dbReference type="PharmGKB" id="PA33096"/>
<dbReference type="VEuPathDB" id="HostDB:ENSG00000059758"/>
<dbReference type="eggNOG" id="KOG0594">
    <property type="taxonomic scope" value="Eukaryota"/>
</dbReference>
<dbReference type="GeneTree" id="ENSGT00940000155834"/>
<dbReference type="InParanoid" id="Q00537"/>
<dbReference type="OMA" id="TGPGKNR"/>
<dbReference type="OrthoDB" id="1732493at2759"/>
<dbReference type="PAN-GO" id="Q00537">
    <property type="GO annotations" value="4 GO annotations based on evolutionary models"/>
</dbReference>
<dbReference type="PhylomeDB" id="Q00537"/>
<dbReference type="TreeFam" id="TF106508"/>
<dbReference type="BRENDA" id="2.7.11.22">
    <property type="organism ID" value="2681"/>
</dbReference>
<dbReference type="PathwayCommons" id="Q00537"/>
<dbReference type="SignaLink" id="Q00537"/>
<dbReference type="BioGRID-ORCS" id="5128">
    <property type="hits" value="10 hits in 1193 CRISPR screens"/>
</dbReference>
<dbReference type="ChiTaRS" id="CDK17">
    <property type="organism name" value="human"/>
</dbReference>
<dbReference type="GeneWiki" id="PCTK2"/>
<dbReference type="GenomeRNAi" id="5128"/>
<dbReference type="Pharos" id="Q00537">
    <property type="development level" value="Tchem"/>
</dbReference>
<dbReference type="PRO" id="PR:Q00537"/>
<dbReference type="Proteomes" id="UP000005640">
    <property type="component" value="Chromosome 12"/>
</dbReference>
<dbReference type="RNAct" id="Q00537">
    <property type="molecule type" value="protein"/>
</dbReference>
<dbReference type="Bgee" id="ENSG00000059758">
    <property type="expression patterns" value="Expressed in corpus callosum and 201 other cell types or tissues"/>
</dbReference>
<dbReference type="ExpressionAtlas" id="Q00537">
    <property type="expression patterns" value="baseline and differential"/>
</dbReference>
<dbReference type="GO" id="GO:0005737">
    <property type="term" value="C:cytoplasm"/>
    <property type="evidence" value="ECO:0000318"/>
    <property type="project" value="GO_Central"/>
</dbReference>
<dbReference type="GO" id="GO:0005634">
    <property type="term" value="C:nucleus"/>
    <property type="evidence" value="ECO:0000318"/>
    <property type="project" value="GO_Central"/>
</dbReference>
<dbReference type="GO" id="GO:0005524">
    <property type="term" value="F:ATP binding"/>
    <property type="evidence" value="ECO:0007669"/>
    <property type="project" value="UniProtKB-KW"/>
</dbReference>
<dbReference type="GO" id="GO:0004693">
    <property type="term" value="F:cyclin-dependent protein serine/threonine kinase activity"/>
    <property type="evidence" value="ECO:0000318"/>
    <property type="project" value="GO_Central"/>
</dbReference>
<dbReference type="GO" id="GO:0004672">
    <property type="term" value="F:protein kinase activity"/>
    <property type="evidence" value="ECO:0000304"/>
    <property type="project" value="ProtInc"/>
</dbReference>
<dbReference type="GO" id="GO:0106310">
    <property type="term" value="F:protein serine kinase activity"/>
    <property type="evidence" value="ECO:0007669"/>
    <property type="project" value="RHEA"/>
</dbReference>
<dbReference type="GO" id="GO:0006468">
    <property type="term" value="P:protein phosphorylation"/>
    <property type="evidence" value="ECO:0000304"/>
    <property type="project" value="ProtInc"/>
</dbReference>
<dbReference type="GO" id="GO:1901987">
    <property type="term" value="P:regulation of cell cycle phase transition"/>
    <property type="evidence" value="ECO:0000318"/>
    <property type="project" value="GO_Central"/>
</dbReference>
<dbReference type="CDD" id="cd07872">
    <property type="entry name" value="STKc_PCTAIRE2"/>
    <property type="match status" value="1"/>
</dbReference>
<dbReference type="FunFam" id="3.30.200.20:FF:000007">
    <property type="entry name" value="Cyclin-dependent kinase 14, putative"/>
    <property type="match status" value="1"/>
</dbReference>
<dbReference type="FunFam" id="1.10.510.10:FF:000061">
    <property type="entry name" value="Putative cyclin-dependent kinase 17"/>
    <property type="match status" value="1"/>
</dbReference>
<dbReference type="Gene3D" id="3.30.200.20">
    <property type="entry name" value="Phosphorylase Kinase, domain 1"/>
    <property type="match status" value="1"/>
</dbReference>
<dbReference type="Gene3D" id="1.10.510.10">
    <property type="entry name" value="Transferase(Phosphotransferase) domain 1"/>
    <property type="match status" value="1"/>
</dbReference>
<dbReference type="InterPro" id="IPR050108">
    <property type="entry name" value="CDK"/>
</dbReference>
<dbReference type="InterPro" id="IPR011009">
    <property type="entry name" value="Kinase-like_dom_sf"/>
</dbReference>
<dbReference type="InterPro" id="IPR000719">
    <property type="entry name" value="Prot_kinase_dom"/>
</dbReference>
<dbReference type="InterPro" id="IPR017441">
    <property type="entry name" value="Protein_kinase_ATP_BS"/>
</dbReference>
<dbReference type="InterPro" id="IPR008271">
    <property type="entry name" value="Ser/Thr_kinase_AS"/>
</dbReference>
<dbReference type="PANTHER" id="PTHR24056">
    <property type="entry name" value="CELL DIVISION PROTEIN KINASE"/>
    <property type="match status" value="1"/>
</dbReference>
<dbReference type="PANTHER" id="PTHR24056:SF128">
    <property type="entry name" value="CYCLIN-DEPENDENT KINASE 17"/>
    <property type="match status" value="1"/>
</dbReference>
<dbReference type="Pfam" id="PF00069">
    <property type="entry name" value="Pkinase"/>
    <property type="match status" value="1"/>
</dbReference>
<dbReference type="SMART" id="SM00220">
    <property type="entry name" value="S_TKc"/>
    <property type="match status" value="1"/>
</dbReference>
<dbReference type="SUPFAM" id="SSF56112">
    <property type="entry name" value="Protein kinase-like (PK-like)"/>
    <property type="match status" value="1"/>
</dbReference>
<dbReference type="PROSITE" id="PS00107">
    <property type="entry name" value="PROTEIN_KINASE_ATP"/>
    <property type="match status" value="1"/>
</dbReference>
<dbReference type="PROSITE" id="PS50011">
    <property type="entry name" value="PROTEIN_KINASE_DOM"/>
    <property type="match status" value="1"/>
</dbReference>
<dbReference type="PROSITE" id="PS00108">
    <property type="entry name" value="PROTEIN_KINASE_ST"/>
    <property type="match status" value="1"/>
</dbReference>
<sequence length="523" mass="59582">MKKFKRRLSLTLRGSQTIDESLSELAEQMTIEENSSKDNEPIVKNGRPPTSHSMHSFLHQYTGSFKKPPLRRPHSVIGGSLGSFMAMPRNGSRLDIVHENLKMGSDGESDQASGTSSDEVQSPTGVCLRNRIHRRISMEDLNKRLSLPADIRIPDGYLEKLQINSPPFDQPMSRRSRRASLSEIGFGKMETYIKLEKLGEGTYATVYKGRSKLTENLVALKEIRLEHEEGAPCTAIREVSLLKDLKHANIVTLHDIVHTDKSLTLVFEYLDKDLKQYMDDCGNIMSMHNVKLFLYQILRGLAYCHRRKVLHRDLKPQNLLINEKGELKLADFGLARAKSVPTKTYSNEVVTLWYRPPDVLLGSSEYSTQIDMWGVGCIFFEMASGRPLFPGSTVEDELHLIFRLLGTPSQETWPGISSNEEFKNYNFPKYKPQPLINHAPRLDSEGIELITKFLQYESKKRVSAEEAMKHVYFRSLGPRIHALPESVSIFSLKEIQLQKDPGFRNSSYPETGHGKNRRQSMLF</sequence>
<protein>
    <recommendedName>
        <fullName>Cyclin-dependent kinase 17</fullName>
        <ecNumber>2.7.11.22</ecNumber>
    </recommendedName>
    <alternativeName>
        <fullName>Cell division protein kinase 17</fullName>
    </alternativeName>
    <alternativeName>
        <fullName>PCTAIRE-motif protein kinase 2</fullName>
    </alternativeName>
    <alternativeName>
        <fullName>Serine/threonine-protein kinase PCTAIRE-2</fullName>
    </alternativeName>
</protein>
<comment type="function">
    <text evidence="1">May play a role in terminally differentiated neurons. Has a Ser/Thr-phosphorylating activity for histone H1 (By similarity).</text>
</comment>
<comment type="catalytic activity">
    <reaction>
        <text>L-seryl-[protein] + ATP = O-phospho-L-seryl-[protein] + ADP + H(+)</text>
        <dbReference type="Rhea" id="RHEA:17989"/>
        <dbReference type="Rhea" id="RHEA-COMP:9863"/>
        <dbReference type="Rhea" id="RHEA-COMP:11604"/>
        <dbReference type="ChEBI" id="CHEBI:15378"/>
        <dbReference type="ChEBI" id="CHEBI:29999"/>
        <dbReference type="ChEBI" id="CHEBI:30616"/>
        <dbReference type="ChEBI" id="CHEBI:83421"/>
        <dbReference type="ChEBI" id="CHEBI:456216"/>
        <dbReference type="EC" id="2.7.11.22"/>
    </reaction>
</comment>
<comment type="catalytic activity">
    <reaction>
        <text>L-threonyl-[protein] + ATP = O-phospho-L-threonyl-[protein] + ADP + H(+)</text>
        <dbReference type="Rhea" id="RHEA:46608"/>
        <dbReference type="Rhea" id="RHEA-COMP:11060"/>
        <dbReference type="Rhea" id="RHEA-COMP:11605"/>
        <dbReference type="ChEBI" id="CHEBI:15378"/>
        <dbReference type="ChEBI" id="CHEBI:30013"/>
        <dbReference type="ChEBI" id="CHEBI:30616"/>
        <dbReference type="ChEBI" id="CHEBI:61977"/>
        <dbReference type="ChEBI" id="CHEBI:456216"/>
        <dbReference type="EC" id="2.7.11.22"/>
    </reaction>
</comment>
<comment type="subunit">
    <text evidence="1">Found in a complex containing CABLES1, CDK16 and TDRD7. Interacts with TDRD7 (By similarity).</text>
</comment>
<comment type="interaction">
    <interactant intactId="EBI-624648">
        <id>Q00537</id>
    </interactant>
    <interactant intactId="EBI-10171799">
        <id>A1A5D9</id>
        <label>BICDL2</label>
    </interactant>
    <organismsDiffer>false</organismsDiffer>
    <experiments>3</experiments>
</comment>
<comment type="interaction">
    <interactant intactId="EBI-624648">
        <id>Q00537</id>
    </interactant>
    <interactant intactId="EBI-726261">
        <id>Q00536</id>
        <label>CDK16</label>
    </interactant>
    <organismsDiffer>false</organismsDiffer>
    <experiments>5</experiments>
</comment>
<comment type="interaction">
    <interactant intactId="EBI-624648">
        <id>Q00537</id>
    </interactant>
    <interactant intactId="EBI-711280">
        <id>P42772</id>
        <label>CDKN2B</label>
    </interactant>
    <organismsDiffer>false</organismsDiffer>
    <experiments>3</experiments>
</comment>
<comment type="interaction">
    <interactant intactId="EBI-624648">
        <id>Q00537</id>
    </interactant>
    <interactant intactId="EBI-744973">
        <id>Q9C005</id>
        <label>DPY30</label>
    </interactant>
    <organismsDiffer>false</organismsDiffer>
    <experiments>3</experiments>
</comment>
<comment type="interaction">
    <interactant intactId="EBI-624648">
        <id>Q00537</id>
    </interactant>
    <interactant intactId="EBI-356498">
        <id>P62258</id>
        <label>YWHAE</label>
    </interactant>
    <organismsDiffer>false</organismsDiffer>
    <experiments>4</experiments>
</comment>
<comment type="interaction">
    <interactant intactId="EBI-624648">
        <id>Q00537</id>
    </interactant>
    <interactant intactId="EBI-347088">
        <id>P63104</id>
        <label>YWHAZ</label>
    </interactant>
    <organismsDiffer>false</organismsDiffer>
    <experiments>6</experiments>
</comment>
<comment type="alternative products">
    <event type="alternative splicing"/>
    <isoform>
        <id>Q00537-1</id>
        <name>1</name>
        <sequence type="displayed"/>
    </isoform>
    <isoform>
        <id>Q00537-2</id>
        <name>2</name>
        <sequence type="described" ref="VSP_043295"/>
    </isoform>
</comment>
<comment type="similarity">
    <text evidence="7">Belongs to the protein kinase superfamily. CMGC Ser/Thr protein kinase family. CDC2/CDKX subfamily.</text>
</comment>
<reference key="1">
    <citation type="journal article" date="1992" name="EMBO J.">
        <title>A family of human cdc2-related protein kinases.</title>
        <authorList>
            <person name="Meyerson M."/>
            <person name="Enders G.H."/>
            <person name="Wu C.-L."/>
            <person name="Su L.-K."/>
            <person name="Gorka C."/>
            <person name="Nelson C."/>
            <person name="Harlow E."/>
            <person name="Tsai L.-H."/>
        </authorList>
    </citation>
    <scope>NUCLEOTIDE SEQUENCE [MRNA] (ISOFORM 1)</scope>
    <source>
        <tissue>Fetal brain</tissue>
    </source>
</reference>
<reference key="2">
    <citation type="journal article" date="2004" name="Nat. Genet.">
        <title>Complete sequencing and characterization of 21,243 full-length human cDNAs.</title>
        <authorList>
            <person name="Ota T."/>
            <person name="Suzuki Y."/>
            <person name="Nishikawa T."/>
            <person name="Otsuki T."/>
            <person name="Sugiyama T."/>
            <person name="Irie R."/>
            <person name="Wakamatsu A."/>
            <person name="Hayashi K."/>
            <person name="Sato H."/>
            <person name="Nagai K."/>
            <person name="Kimura K."/>
            <person name="Makita H."/>
            <person name="Sekine M."/>
            <person name="Obayashi M."/>
            <person name="Nishi T."/>
            <person name="Shibahara T."/>
            <person name="Tanaka T."/>
            <person name="Ishii S."/>
            <person name="Yamamoto J."/>
            <person name="Saito K."/>
            <person name="Kawai Y."/>
            <person name="Isono Y."/>
            <person name="Nakamura Y."/>
            <person name="Nagahari K."/>
            <person name="Murakami K."/>
            <person name="Yasuda T."/>
            <person name="Iwayanagi T."/>
            <person name="Wagatsuma M."/>
            <person name="Shiratori A."/>
            <person name="Sudo H."/>
            <person name="Hosoiri T."/>
            <person name="Kaku Y."/>
            <person name="Kodaira H."/>
            <person name="Kondo H."/>
            <person name="Sugawara M."/>
            <person name="Takahashi M."/>
            <person name="Kanda K."/>
            <person name="Yokoi T."/>
            <person name="Furuya T."/>
            <person name="Kikkawa E."/>
            <person name="Omura Y."/>
            <person name="Abe K."/>
            <person name="Kamihara K."/>
            <person name="Katsuta N."/>
            <person name="Sato K."/>
            <person name="Tanikawa M."/>
            <person name="Yamazaki M."/>
            <person name="Ninomiya K."/>
            <person name="Ishibashi T."/>
            <person name="Yamashita H."/>
            <person name="Murakawa K."/>
            <person name="Fujimori K."/>
            <person name="Tanai H."/>
            <person name="Kimata M."/>
            <person name="Watanabe M."/>
            <person name="Hiraoka S."/>
            <person name="Chiba Y."/>
            <person name="Ishida S."/>
            <person name="Ono Y."/>
            <person name="Takiguchi S."/>
            <person name="Watanabe S."/>
            <person name="Yosida M."/>
            <person name="Hotuta T."/>
            <person name="Kusano J."/>
            <person name="Kanehori K."/>
            <person name="Takahashi-Fujii A."/>
            <person name="Hara H."/>
            <person name="Tanase T.-O."/>
            <person name="Nomura Y."/>
            <person name="Togiya S."/>
            <person name="Komai F."/>
            <person name="Hara R."/>
            <person name="Takeuchi K."/>
            <person name="Arita M."/>
            <person name="Imose N."/>
            <person name="Musashino K."/>
            <person name="Yuuki H."/>
            <person name="Oshima A."/>
            <person name="Sasaki N."/>
            <person name="Aotsuka S."/>
            <person name="Yoshikawa Y."/>
            <person name="Matsunawa H."/>
            <person name="Ichihara T."/>
            <person name="Shiohata N."/>
            <person name="Sano S."/>
            <person name="Moriya S."/>
            <person name="Momiyama H."/>
            <person name="Satoh N."/>
            <person name="Takami S."/>
            <person name="Terashima Y."/>
            <person name="Suzuki O."/>
            <person name="Nakagawa S."/>
            <person name="Senoh A."/>
            <person name="Mizoguchi H."/>
            <person name="Goto Y."/>
            <person name="Shimizu F."/>
            <person name="Wakebe H."/>
            <person name="Hishigaki H."/>
            <person name="Watanabe T."/>
            <person name="Sugiyama A."/>
            <person name="Takemoto M."/>
            <person name="Kawakami B."/>
            <person name="Yamazaki M."/>
            <person name="Watanabe K."/>
            <person name="Kumagai A."/>
            <person name="Itakura S."/>
            <person name="Fukuzumi Y."/>
            <person name="Fujimori Y."/>
            <person name="Komiyama M."/>
            <person name="Tashiro H."/>
            <person name="Tanigami A."/>
            <person name="Fujiwara T."/>
            <person name="Ono T."/>
            <person name="Yamada K."/>
            <person name="Fujii Y."/>
            <person name="Ozaki K."/>
            <person name="Hirao M."/>
            <person name="Ohmori Y."/>
            <person name="Kawabata A."/>
            <person name="Hikiji T."/>
            <person name="Kobatake N."/>
            <person name="Inagaki H."/>
            <person name="Ikema Y."/>
            <person name="Okamoto S."/>
            <person name="Okitani R."/>
            <person name="Kawakami T."/>
            <person name="Noguchi S."/>
            <person name="Itoh T."/>
            <person name="Shigeta K."/>
            <person name="Senba T."/>
            <person name="Matsumura K."/>
            <person name="Nakajima Y."/>
            <person name="Mizuno T."/>
            <person name="Morinaga M."/>
            <person name="Sasaki M."/>
            <person name="Togashi T."/>
            <person name="Oyama M."/>
            <person name="Hata H."/>
            <person name="Watanabe M."/>
            <person name="Komatsu T."/>
            <person name="Mizushima-Sugano J."/>
            <person name="Satoh T."/>
            <person name="Shirai Y."/>
            <person name="Takahashi Y."/>
            <person name="Nakagawa K."/>
            <person name="Okumura K."/>
            <person name="Nagase T."/>
            <person name="Nomura N."/>
            <person name="Kikuchi H."/>
            <person name="Masuho Y."/>
            <person name="Yamashita R."/>
            <person name="Nakai K."/>
            <person name="Yada T."/>
            <person name="Nakamura Y."/>
            <person name="Ohara O."/>
            <person name="Isogai T."/>
            <person name="Sugano S."/>
        </authorList>
    </citation>
    <scope>NUCLEOTIDE SEQUENCE [LARGE SCALE MRNA] (ISOFORMS 1 AND 2)</scope>
    <source>
        <tissue>Trachea</tissue>
    </source>
</reference>
<reference key="3">
    <citation type="journal article" date="2006" name="Nature">
        <title>The finished DNA sequence of human chromosome 12.</title>
        <authorList>
            <person name="Scherer S.E."/>
            <person name="Muzny D.M."/>
            <person name="Buhay C.J."/>
            <person name="Chen R."/>
            <person name="Cree A."/>
            <person name="Ding Y."/>
            <person name="Dugan-Rocha S."/>
            <person name="Gill R."/>
            <person name="Gunaratne P."/>
            <person name="Harris R.A."/>
            <person name="Hawes A.C."/>
            <person name="Hernandez J."/>
            <person name="Hodgson A.V."/>
            <person name="Hume J."/>
            <person name="Jackson A."/>
            <person name="Khan Z.M."/>
            <person name="Kovar-Smith C."/>
            <person name="Lewis L.R."/>
            <person name="Lozado R.J."/>
            <person name="Metzker M.L."/>
            <person name="Milosavljevic A."/>
            <person name="Miner G.R."/>
            <person name="Montgomery K.T."/>
            <person name="Morgan M.B."/>
            <person name="Nazareth L.V."/>
            <person name="Scott G."/>
            <person name="Sodergren E."/>
            <person name="Song X.-Z."/>
            <person name="Steffen D."/>
            <person name="Lovering R.C."/>
            <person name="Wheeler D.A."/>
            <person name="Worley K.C."/>
            <person name="Yuan Y."/>
            <person name="Zhang Z."/>
            <person name="Adams C.Q."/>
            <person name="Ansari-Lari M.A."/>
            <person name="Ayele M."/>
            <person name="Brown M.J."/>
            <person name="Chen G."/>
            <person name="Chen Z."/>
            <person name="Clerc-Blankenburg K.P."/>
            <person name="Davis C."/>
            <person name="Delgado O."/>
            <person name="Dinh H.H."/>
            <person name="Draper H."/>
            <person name="Gonzalez-Garay M.L."/>
            <person name="Havlak P."/>
            <person name="Jackson L.R."/>
            <person name="Jacob L.S."/>
            <person name="Kelly S.H."/>
            <person name="Li L."/>
            <person name="Li Z."/>
            <person name="Liu J."/>
            <person name="Liu W."/>
            <person name="Lu J."/>
            <person name="Maheshwari M."/>
            <person name="Nguyen B.-V."/>
            <person name="Okwuonu G.O."/>
            <person name="Pasternak S."/>
            <person name="Perez L.M."/>
            <person name="Plopper F.J.H."/>
            <person name="Santibanez J."/>
            <person name="Shen H."/>
            <person name="Tabor P.E."/>
            <person name="Verduzco D."/>
            <person name="Waldron L."/>
            <person name="Wang Q."/>
            <person name="Williams G.A."/>
            <person name="Zhang J."/>
            <person name="Zhou J."/>
            <person name="Allen C.C."/>
            <person name="Amin A.G."/>
            <person name="Anyalebechi V."/>
            <person name="Bailey M."/>
            <person name="Barbaria J.A."/>
            <person name="Bimage K.E."/>
            <person name="Bryant N.P."/>
            <person name="Burch P.E."/>
            <person name="Burkett C.E."/>
            <person name="Burrell K.L."/>
            <person name="Calderon E."/>
            <person name="Cardenas V."/>
            <person name="Carter K."/>
            <person name="Casias K."/>
            <person name="Cavazos I."/>
            <person name="Cavazos S.R."/>
            <person name="Ceasar H."/>
            <person name="Chacko J."/>
            <person name="Chan S.N."/>
            <person name="Chavez D."/>
            <person name="Christopoulos C."/>
            <person name="Chu J."/>
            <person name="Cockrell R."/>
            <person name="Cox C.D."/>
            <person name="Dang M."/>
            <person name="Dathorne S.R."/>
            <person name="David R."/>
            <person name="Davis C.M."/>
            <person name="Davy-Carroll L."/>
            <person name="Deshazo D.R."/>
            <person name="Donlin J.E."/>
            <person name="D'Souza L."/>
            <person name="Eaves K.A."/>
            <person name="Egan A."/>
            <person name="Emery-Cohen A.J."/>
            <person name="Escotto M."/>
            <person name="Flagg N."/>
            <person name="Forbes L.D."/>
            <person name="Gabisi A.M."/>
            <person name="Garza M."/>
            <person name="Hamilton C."/>
            <person name="Henderson N."/>
            <person name="Hernandez O."/>
            <person name="Hines S."/>
            <person name="Hogues M.E."/>
            <person name="Huang M."/>
            <person name="Idlebird D.G."/>
            <person name="Johnson R."/>
            <person name="Jolivet A."/>
            <person name="Jones S."/>
            <person name="Kagan R."/>
            <person name="King L.M."/>
            <person name="Leal B."/>
            <person name="Lebow H."/>
            <person name="Lee S."/>
            <person name="LeVan J.M."/>
            <person name="Lewis L.C."/>
            <person name="London P."/>
            <person name="Lorensuhewa L.M."/>
            <person name="Loulseged H."/>
            <person name="Lovett D.A."/>
            <person name="Lucier A."/>
            <person name="Lucier R.L."/>
            <person name="Ma J."/>
            <person name="Madu R.C."/>
            <person name="Mapua P."/>
            <person name="Martindale A.D."/>
            <person name="Martinez E."/>
            <person name="Massey E."/>
            <person name="Mawhiney S."/>
            <person name="Meador M.G."/>
            <person name="Mendez S."/>
            <person name="Mercado C."/>
            <person name="Mercado I.C."/>
            <person name="Merritt C.E."/>
            <person name="Miner Z.L."/>
            <person name="Minja E."/>
            <person name="Mitchell T."/>
            <person name="Mohabbat F."/>
            <person name="Mohabbat K."/>
            <person name="Montgomery B."/>
            <person name="Moore N."/>
            <person name="Morris S."/>
            <person name="Munidasa M."/>
            <person name="Ngo R.N."/>
            <person name="Nguyen N.B."/>
            <person name="Nickerson E."/>
            <person name="Nwaokelemeh O.O."/>
            <person name="Nwokenkwo S."/>
            <person name="Obregon M."/>
            <person name="Oguh M."/>
            <person name="Oragunye N."/>
            <person name="Oviedo R.J."/>
            <person name="Parish B.J."/>
            <person name="Parker D.N."/>
            <person name="Parrish J."/>
            <person name="Parks K.L."/>
            <person name="Paul H.A."/>
            <person name="Payton B.A."/>
            <person name="Perez A."/>
            <person name="Perrin W."/>
            <person name="Pickens A."/>
            <person name="Primus E.L."/>
            <person name="Pu L.-L."/>
            <person name="Puazo M."/>
            <person name="Quiles M.M."/>
            <person name="Quiroz J.B."/>
            <person name="Rabata D."/>
            <person name="Reeves K."/>
            <person name="Ruiz S.J."/>
            <person name="Shao H."/>
            <person name="Sisson I."/>
            <person name="Sonaike T."/>
            <person name="Sorelle R.P."/>
            <person name="Sutton A.E."/>
            <person name="Svatek A.F."/>
            <person name="Svetz L.A."/>
            <person name="Tamerisa K.S."/>
            <person name="Taylor T.R."/>
            <person name="Teague B."/>
            <person name="Thomas N."/>
            <person name="Thorn R.D."/>
            <person name="Trejos Z.Y."/>
            <person name="Trevino B.K."/>
            <person name="Ukegbu O.N."/>
            <person name="Urban J.B."/>
            <person name="Vasquez L.I."/>
            <person name="Vera V.A."/>
            <person name="Villasana D.M."/>
            <person name="Wang L."/>
            <person name="Ward-Moore S."/>
            <person name="Warren J.T."/>
            <person name="Wei X."/>
            <person name="White F."/>
            <person name="Williamson A.L."/>
            <person name="Wleczyk R."/>
            <person name="Wooden H.S."/>
            <person name="Wooden S.H."/>
            <person name="Yen J."/>
            <person name="Yoon L."/>
            <person name="Yoon V."/>
            <person name="Zorrilla S.E."/>
            <person name="Nelson D."/>
            <person name="Kucherlapati R."/>
            <person name="Weinstock G."/>
            <person name="Gibbs R.A."/>
        </authorList>
    </citation>
    <scope>NUCLEOTIDE SEQUENCE [LARGE SCALE GENOMIC DNA]</scope>
</reference>
<reference key="4">
    <citation type="submission" date="2005-07" db="EMBL/GenBank/DDBJ databases">
        <authorList>
            <person name="Mural R.J."/>
            <person name="Istrail S."/>
            <person name="Sutton G.G."/>
            <person name="Florea L."/>
            <person name="Halpern A.L."/>
            <person name="Mobarry C.M."/>
            <person name="Lippert R."/>
            <person name="Walenz B."/>
            <person name="Shatkay H."/>
            <person name="Dew I."/>
            <person name="Miller J.R."/>
            <person name="Flanigan M.J."/>
            <person name="Edwards N.J."/>
            <person name="Bolanos R."/>
            <person name="Fasulo D."/>
            <person name="Halldorsson B.V."/>
            <person name="Hannenhalli S."/>
            <person name="Turner R."/>
            <person name="Yooseph S."/>
            <person name="Lu F."/>
            <person name="Nusskern D.R."/>
            <person name="Shue B.C."/>
            <person name="Zheng X.H."/>
            <person name="Zhong F."/>
            <person name="Delcher A.L."/>
            <person name="Huson D.H."/>
            <person name="Kravitz S.A."/>
            <person name="Mouchard L."/>
            <person name="Reinert K."/>
            <person name="Remington K.A."/>
            <person name="Clark A.G."/>
            <person name="Waterman M.S."/>
            <person name="Eichler E.E."/>
            <person name="Adams M.D."/>
            <person name="Hunkapiller M.W."/>
            <person name="Myers E.W."/>
            <person name="Venter J.C."/>
        </authorList>
    </citation>
    <scope>NUCLEOTIDE SEQUENCE [LARGE SCALE GENOMIC DNA]</scope>
</reference>
<reference key="5">
    <citation type="journal article" date="2004" name="Genome Res.">
        <title>The status, quality, and expansion of the NIH full-length cDNA project: the Mammalian Gene Collection (MGC).</title>
        <authorList>
            <consortium name="The MGC Project Team"/>
        </authorList>
    </citation>
    <scope>NUCLEOTIDE SEQUENCE [LARGE SCALE MRNA] (ISOFORM 1)</scope>
    <source>
        <tissue>Testis</tissue>
    </source>
</reference>
<reference key="6">
    <citation type="journal article" date="2008" name="Mol. Cell">
        <title>Kinase-selective enrichment enables quantitative phosphoproteomics of the kinome across the cell cycle.</title>
        <authorList>
            <person name="Daub H."/>
            <person name="Olsen J.V."/>
            <person name="Bairlein M."/>
            <person name="Gnad F."/>
            <person name="Oppermann F.S."/>
            <person name="Korner R."/>
            <person name="Greff Z."/>
            <person name="Keri G."/>
            <person name="Stemmann O."/>
            <person name="Mann M."/>
        </authorList>
    </citation>
    <scope>PHOSPHORYLATION [LARGE SCALE ANALYSIS] AT SER-137; SER-146 AND SER-165</scope>
    <scope>IDENTIFICATION BY MASS SPECTROMETRY [LARGE SCALE ANALYSIS]</scope>
    <source>
        <tissue>Cervix carcinoma</tissue>
    </source>
</reference>
<reference key="7">
    <citation type="journal article" date="2008" name="Proc. Natl. Acad. Sci. U.S.A.">
        <title>A quantitative atlas of mitotic phosphorylation.</title>
        <authorList>
            <person name="Dephoure N."/>
            <person name="Zhou C."/>
            <person name="Villen J."/>
            <person name="Beausoleil S.A."/>
            <person name="Bakalarski C.E."/>
            <person name="Elledge S.J."/>
            <person name="Gygi S.P."/>
        </authorList>
    </citation>
    <scope>PHOSPHORYLATION [LARGE SCALE ANALYSIS] AT SER-165 AND SER-180</scope>
    <scope>IDENTIFICATION BY MASS SPECTROMETRY [LARGE SCALE ANALYSIS]</scope>
    <source>
        <tissue>Cervix carcinoma</tissue>
    </source>
</reference>
<reference key="8">
    <citation type="journal article" date="2009" name="Mol. Cell. Proteomics">
        <title>Large-scale proteomics analysis of the human kinome.</title>
        <authorList>
            <person name="Oppermann F.S."/>
            <person name="Gnad F."/>
            <person name="Olsen J.V."/>
            <person name="Hornberger R."/>
            <person name="Greff Z."/>
            <person name="Keri G."/>
            <person name="Mann M."/>
            <person name="Daub H."/>
        </authorList>
    </citation>
    <scope>PHOSPHORYLATION [LARGE SCALE ANALYSIS] AT SER-80; SER-105; SER-137 AND SER-165</scope>
    <scope>IDENTIFICATION BY MASS SPECTROMETRY [LARGE SCALE ANALYSIS]</scope>
</reference>
<reference key="9">
    <citation type="journal article" date="2009" name="Sci. Signal.">
        <title>Quantitative phosphoproteomic analysis of T cell receptor signaling reveals system-wide modulation of protein-protein interactions.</title>
        <authorList>
            <person name="Mayya V."/>
            <person name="Lundgren D.H."/>
            <person name="Hwang S.-I."/>
            <person name="Rezaul K."/>
            <person name="Wu L."/>
            <person name="Eng J.K."/>
            <person name="Rodionov V."/>
            <person name="Han D.K."/>
        </authorList>
    </citation>
    <scope>PHOSPHORYLATION [LARGE SCALE ANALYSIS] AT SER-165 AND SER-180</scope>
    <scope>IDENTIFICATION BY MASS SPECTROMETRY [LARGE SCALE ANALYSIS]</scope>
    <source>
        <tissue>Leukemic T-cell</tissue>
    </source>
</reference>
<reference key="10">
    <citation type="journal article" date="2011" name="Sci. Signal.">
        <title>System-wide temporal characterization of the proteome and phosphoproteome of human embryonic stem cell differentiation.</title>
        <authorList>
            <person name="Rigbolt K.T."/>
            <person name="Prokhorova T.A."/>
            <person name="Akimov V."/>
            <person name="Henningsen J."/>
            <person name="Johansen P.T."/>
            <person name="Kratchmarova I."/>
            <person name="Kassem M."/>
            <person name="Mann M."/>
            <person name="Olsen J.V."/>
            <person name="Blagoev B."/>
        </authorList>
    </citation>
    <scope>PHOSPHORYLATION [LARGE SCALE ANALYSIS] AT SER-137 AND SER-180</scope>
    <scope>IDENTIFICATION BY MASS SPECTROMETRY [LARGE SCALE ANALYSIS]</scope>
</reference>
<reference key="11">
    <citation type="journal article" date="2013" name="J. Proteome Res.">
        <title>Toward a comprehensive characterization of a human cancer cell phosphoproteome.</title>
        <authorList>
            <person name="Zhou H."/>
            <person name="Di Palma S."/>
            <person name="Preisinger C."/>
            <person name="Peng M."/>
            <person name="Polat A.N."/>
            <person name="Heck A.J."/>
            <person name="Mohammed S."/>
        </authorList>
    </citation>
    <scope>PHOSPHORYLATION [LARGE SCALE ANALYSIS] AT SER-9; SER-92; SER-137; SER-165 AND SER-180</scope>
    <scope>IDENTIFICATION BY MASS SPECTROMETRY [LARGE SCALE ANALYSIS]</scope>
    <source>
        <tissue>Cervix carcinoma</tissue>
        <tissue>Erythroleukemia</tissue>
    </source>
</reference>
<reference key="12">
    <citation type="journal article" date="2011" name="Nature">
        <title>Exome sequencing identifies frequent mutation of the SWI/SNF complex gene PBRM1 in renal carcinoma.</title>
        <authorList>
            <person name="Varela I."/>
            <person name="Tarpey P."/>
            <person name="Raine K."/>
            <person name="Huang D."/>
            <person name="Ong C.K."/>
            <person name="Stephens P."/>
            <person name="Davies H."/>
            <person name="Jones D."/>
            <person name="Lin M.L."/>
            <person name="Teague J."/>
            <person name="Bignell G."/>
            <person name="Butler A."/>
            <person name="Cho J."/>
            <person name="Dalgliesh G.L."/>
            <person name="Galappaththige D."/>
            <person name="Greenman C."/>
            <person name="Hardy C."/>
            <person name="Jia M."/>
            <person name="Latimer C."/>
            <person name="Lau K.W."/>
            <person name="Marshall J."/>
            <person name="McLaren S."/>
            <person name="Menzies A."/>
            <person name="Mudie L."/>
            <person name="Stebbings L."/>
            <person name="Largaespada D.A."/>
            <person name="Wessels L.F.A."/>
            <person name="Richard S."/>
            <person name="Kahnoski R.J."/>
            <person name="Anema J."/>
            <person name="Tuveson D.A."/>
            <person name="Perez-Mancera P.A."/>
            <person name="Mustonen V."/>
            <person name="Fischer A."/>
            <person name="Adams D.J."/>
            <person name="Rust A."/>
            <person name="Chan-On W."/>
            <person name="Subimerb C."/>
            <person name="Dykema K."/>
            <person name="Furge K."/>
            <person name="Campbell P.J."/>
            <person name="Teh B.T."/>
            <person name="Stratton M.R."/>
            <person name="Futreal P.A."/>
        </authorList>
    </citation>
    <scope>VARIANT ILE-214</scope>
</reference>
<evidence type="ECO:0000250" key="1"/>
<evidence type="ECO:0000255" key="2">
    <source>
        <dbReference type="PROSITE-ProRule" id="PRU00159"/>
    </source>
</evidence>
<evidence type="ECO:0000255" key="3">
    <source>
        <dbReference type="PROSITE-ProRule" id="PRU10027"/>
    </source>
</evidence>
<evidence type="ECO:0000256" key="4">
    <source>
        <dbReference type="SAM" id="MobiDB-lite"/>
    </source>
</evidence>
<evidence type="ECO:0000269" key="5">
    <source>
    </source>
</evidence>
<evidence type="ECO:0000303" key="6">
    <source>
    </source>
</evidence>
<evidence type="ECO:0000305" key="7"/>
<evidence type="ECO:0007744" key="8">
    <source>
    </source>
</evidence>
<evidence type="ECO:0007744" key="9">
    <source>
    </source>
</evidence>
<evidence type="ECO:0007744" key="10">
    <source>
    </source>
</evidence>
<evidence type="ECO:0007744" key="11">
    <source>
    </source>
</evidence>
<evidence type="ECO:0007744" key="12">
    <source>
    </source>
</evidence>
<evidence type="ECO:0007744" key="13">
    <source>
    </source>
</evidence>
<feature type="chain" id="PRO_0000086487" description="Cyclin-dependent kinase 17">
    <location>
        <begin position="1"/>
        <end position="523"/>
    </location>
</feature>
<feature type="domain" description="Protein kinase" evidence="2">
    <location>
        <begin position="192"/>
        <end position="473"/>
    </location>
</feature>
<feature type="region of interest" description="Disordered" evidence="4">
    <location>
        <begin position="30"/>
        <end position="55"/>
    </location>
</feature>
<feature type="region of interest" description="Disordered" evidence="4">
    <location>
        <begin position="103"/>
        <end position="123"/>
    </location>
</feature>
<feature type="region of interest" description="Disordered" evidence="4">
    <location>
        <begin position="501"/>
        <end position="523"/>
    </location>
</feature>
<feature type="compositionally biased region" description="Polar residues" evidence="4">
    <location>
        <begin position="110"/>
        <end position="123"/>
    </location>
</feature>
<feature type="compositionally biased region" description="Basic residues" evidence="4">
    <location>
        <begin position="514"/>
        <end position="523"/>
    </location>
</feature>
<feature type="active site" description="Proton acceptor" evidence="2 3">
    <location>
        <position position="313"/>
    </location>
</feature>
<feature type="binding site" evidence="2">
    <location>
        <begin position="198"/>
        <end position="206"/>
    </location>
    <ligand>
        <name>ATP</name>
        <dbReference type="ChEBI" id="CHEBI:30616"/>
    </ligand>
</feature>
<feature type="binding site" evidence="2">
    <location>
        <position position="221"/>
    </location>
    <ligand>
        <name>ATP</name>
        <dbReference type="ChEBI" id="CHEBI:30616"/>
    </ligand>
</feature>
<feature type="modified residue" description="Phosphoserine" evidence="13">
    <location>
        <position position="9"/>
    </location>
</feature>
<feature type="modified residue" description="Phosphoserine" evidence="10">
    <location>
        <position position="80"/>
    </location>
</feature>
<feature type="modified residue" description="Phosphoserine" evidence="13">
    <location>
        <position position="92"/>
    </location>
</feature>
<feature type="modified residue" description="Phosphoserine" evidence="10">
    <location>
        <position position="105"/>
    </location>
</feature>
<feature type="modified residue" description="Phosphoserine" evidence="9 10 12 13">
    <location>
        <position position="137"/>
    </location>
</feature>
<feature type="modified residue" description="Phosphoserine" evidence="9">
    <location>
        <position position="146"/>
    </location>
</feature>
<feature type="modified residue" description="Phosphoserine" evidence="8 9 10 11 13">
    <location>
        <position position="165"/>
    </location>
</feature>
<feature type="modified residue" description="Phosphoserine" evidence="8 11 12 13">
    <location>
        <position position="180"/>
    </location>
</feature>
<feature type="splice variant" id="VSP_043295" description="In isoform 2." evidence="6">
    <original>HGKNRRQSMLF</original>
    <variation>VFVINHFTCRS</variation>
    <location>
        <begin position="513"/>
        <end position="523"/>
    </location>
</feature>
<feature type="sequence variant" id="VAR_064743" description="Found in a renal cell carcinoma sample; somatic mutation; dbSNP:rs764448325." evidence="5">
    <original>T</original>
    <variation>I</variation>
    <location>
        <position position="214"/>
    </location>
</feature>
<feature type="sequence conflict" description="In Ref. 1; CAA47004." evidence="7" ref="1">
    <original>S</original>
    <variation>L</variation>
    <location>
        <position position="367"/>
    </location>
</feature>
<feature type="sequence conflict" description="In Ref. 1; CAA47004." evidence="7" ref="1">
    <original>Q</original>
    <variation>E</variation>
    <location>
        <position position="433"/>
    </location>
</feature>
<feature type="sequence conflict" description="In Ref. 1; CAA47004." evidence="7" ref="1">
    <original>T</original>
    <variation>R</variation>
    <location>
        <position position="451"/>
    </location>
</feature>
<name>CDK17_HUMAN</name>